<comment type="function">
    <text evidence="1">Forms an icosahedral capsid with a T=7 symmetry and a 50 nm diameter. The capsid is composed of 72 pentamers linked to each other by disulfide bonds and associated with L2 proteins. Binds to heparan sulfate proteoglycans on cell surface of basal layer keratinocytes to provide initial virion attachment. This binding mediates a conformational change in the virus capsid that facilitates efficient infection. The virion enters the host cell via endocytosis. During virus trafficking, L1 protein dissociates from the viral DNA and the genomic DNA is released to the host nucleus. The virion assembly takes place within the cell nucleus. Encapsulates the genomic DNA together with protein L2.</text>
</comment>
<comment type="subunit">
    <text evidence="1">Self-assembles into homopentamers. The capsid has an icosahedral symmetry and consists of 72 capsomers, with each capsomer being a pentamer of L1. Interacts with the minor capsid protein L2; this interaction is necessary for viral genome encapsidation. Interacts with protein E2; this interaction enhances E2-dependent replication and transcription activation.</text>
</comment>
<comment type="subcellular location">
    <subcellularLocation>
        <location evidence="1">Virion</location>
    </subcellularLocation>
    <subcellularLocation>
        <location evidence="1">Host nucleus</location>
    </subcellularLocation>
</comment>
<comment type="similarity">
    <text evidence="1">Belongs to the papillomaviridae L1 protein family.</text>
</comment>
<organismHost>
    <name type="scientific">Homo sapiens</name>
    <name type="common">Human</name>
    <dbReference type="NCBI Taxonomy" id="9606"/>
</organismHost>
<dbReference type="EMBL" id="X55964">
    <property type="status" value="NOT_ANNOTATED_CDS"/>
    <property type="molecule type" value="Genomic_DNA"/>
</dbReference>
<dbReference type="PIR" id="S15620">
    <property type="entry name" value="S15620"/>
</dbReference>
<dbReference type="SMR" id="P25486"/>
<dbReference type="Proteomes" id="UP000007710">
    <property type="component" value="Segment"/>
</dbReference>
<dbReference type="GO" id="GO:0042025">
    <property type="term" value="C:host cell nucleus"/>
    <property type="evidence" value="ECO:0007669"/>
    <property type="project" value="UniProtKB-SubCell"/>
</dbReference>
<dbReference type="GO" id="GO:0039620">
    <property type="term" value="C:T=7 icosahedral viral capsid"/>
    <property type="evidence" value="ECO:0007669"/>
    <property type="project" value="UniProtKB-UniRule"/>
</dbReference>
<dbReference type="GO" id="GO:0005198">
    <property type="term" value="F:structural molecule activity"/>
    <property type="evidence" value="ECO:0007669"/>
    <property type="project" value="UniProtKB-UniRule"/>
</dbReference>
<dbReference type="GO" id="GO:0075509">
    <property type="term" value="P:endocytosis involved in viral entry into host cell"/>
    <property type="evidence" value="ECO:0007669"/>
    <property type="project" value="UniProtKB-KW"/>
</dbReference>
<dbReference type="GO" id="GO:0019062">
    <property type="term" value="P:virion attachment to host cell"/>
    <property type="evidence" value="ECO:0007669"/>
    <property type="project" value="UniProtKB-UniRule"/>
</dbReference>
<dbReference type="Gene3D" id="2.60.175.20">
    <property type="entry name" value="Major capsid L1 (late) superfamily, Papillomavirus"/>
    <property type="match status" value="2"/>
</dbReference>
<dbReference type="HAMAP" id="MF_04002">
    <property type="entry name" value="PPV_L1"/>
    <property type="match status" value="1"/>
</dbReference>
<dbReference type="InterPro" id="IPR002210">
    <property type="entry name" value="Capsid_L1_Papillomavir"/>
</dbReference>
<dbReference type="InterPro" id="IPR036973">
    <property type="entry name" value="Capsid_L1_sf_Papillomavir"/>
</dbReference>
<dbReference type="InterPro" id="IPR011222">
    <property type="entry name" value="dsDNA_vir_gr_I_capsid"/>
</dbReference>
<dbReference type="Pfam" id="PF00500">
    <property type="entry name" value="Late_protein_L1"/>
    <property type="match status" value="1"/>
</dbReference>
<dbReference type="PRINTS" id="PR00865">
    <property type="entry name" value="HPVCAPSIDL1"/>
</dbReference>
<dbReference type="SUPFAM" id="SSF88648">
    <property type="entry name" value="Group I dsDNA viruses"/>
    <property type="match status" value="1"/>
</dbReference>
<protein>
    <recommendedName>
        <fullName evidence="1">Major capsid protein L1</fullName>
    </recommendedName>
</protein>
<accession>P25486</accession>
<proteinExistence type="inferred from homology"/>
<keyword id="KW-0167">Capsid protein</keyword>
<keyword id="KW-1015">Disulfide bond</keyword>
<keyword id="KW-1048">Host nucleus</keyword>
<keyword id="KW-0945">Host-virus interaction</keyword>
<keyword id="KW-0426">Late protein</keyword>
<keyword id="KW-1145">T=7 icosahedral capsid protein</keyword>
<keyword id="KW-1161">Viral attachment to host cell</keyword>
<keyword id="KW-1162">Viral penetration into host cytoplasm</keyword>
<keyword id="KW-0946">Virion</keyword>
<keyword id="KW-1164">Virus endocytosis by host</keyword>
<keyword id="KW-1160">Virus entry into host cell</keyword>
<reference key="1">
    <citation type="journal article" date="1990" name="Virus Res.">
        <title>A comparative sequence analysis of two human papillomavirus (HPV) types 2a and 57.</title>
        <authorList>
            <person name="Hirsch-Behnam A."/>
            <person name="Delius H."/>
            <person name="de Villiers E.M."/>
        </authorList>
    </citation>
    <scope>NUCLEOTIDE SEQUENCE [GENOMIC DNA]</scope>
</reference>
<sequence>MSCGLNDVNVSTISLQMALWRPNESKVYLPPTPVSKVISTDVYVTRTNVYYHGGSSRLLTVGHPYYSIKKSNNKVAVPKVSGYQYRVFHVKLPDPNKFGLPDADLYDPDTQRLLWACVGVEVGRGQPLGVGVSGHPYYNRLDDTENAHTPDTADDGRENISMDYKQTQLFILGCKPPIGEHWSKGTTCNGSSAAGDCPPLQFTNTTIEDGDMVETGFGALDFATLQSNKSDVPLDICTNTCKYPDYLKMAAEPYGDSMFFSLRREQMFTRHFFNLGGKMGDTIPDELYIKSTSVPTPGSHVYTSTPSGSMVSSEQQLFNKPYWLRRAQGHNNGMCWGNRVFLTVVDTTRSTNVSLCATEASDTNYKATNFKEYLRHMEEYDLQFIFQLCKITLTPEIMAYIHNMDPQLLEDWNFGVPPPPSASLQDTYRYLQSQAITCQKPTPPKTPTDPYASLTFWDVDLSESFSMDLDQFPLGRKFLLQRGAMPTVSRKRAAVSGTTPPTSKRKRVRR</sequence>
<name>VL1_HPV2A</name>
<feature type="chain" id="PRO_0000133484" description="Major capsid protein L1">
    <location>
        <begin position="1"/>
        <end position="510"/>
    </location>
</feature>
<feature type="region of interest" description="Disordered" evidence="2">
    <location>
        <begin position="489"/>
        <end position="510"/>
    </location>
</feature>
<feature type="disulfide bond" description="Interchain (with C-438)" evidence="1">
    <location>
        <position position="188"/>
    </location>
</feature>
<feature type="disulfide bond" description="Interchain (with C-188)" evidence="1">
    <location>
        <position position="438"/>
    </location>
</feature>
<organism>
    <name type="scientific">Human papillomavirus type 2a</name>
    <dbReference type="NCBI Taxonomy" id="10584"/>
    <lineage>
        <taxon>Viruses</taxon>
        <taxon>Monodnaviria</taxon>
        <taxon>Shotokuvirae</taxon>
        <taxon>Cossaviricota</taxon>
        <taxon>Papovaviricetes</taxon>
        <taxon>Zurhausenvirales</taxon>
        <taxon>Papillomaviridae</taxon>
        <taxon>Firstpapillomavirinae</taxon>
        <taxon>Alphapapillomavirus</taxon>
        <taxon>Alphapapillomavirus 4</taxon>
    </lineage>
</organism>
<gene>
    <name evidence="1" type="primary">L1</name>
</gene>
<evidence type="ECO:0000255" key="1">
    <source>
        <dbReference type="HAMAP-Rule" id="MF_04002"/>
    </source>
</evidence>
<evidence type="ECO:0000256" key="2">
    <source>
        <dbReference type="SAM" id="MobiDB-lite"/>
    </source>
</evidence>